<sequence>SNKKNYQKEIVDKHNALRRSVK</sequence>
<dbReference type="GO" id="GO:0005576">
    <property type="term" value="C:extracellular region"/>
    <property type="evidence" value="ECO:0007669"/>
    <property type="project" value="UniProtKB-SubCell"/>
</dbReference>
<dbReference type="GO" id="GO:0090729">
    <property type="term" value="F:toxin activity"/>
    <property type="evidence" value="ECO:0007669"/>
    <property type="project" value="UniProtKB-KW"/>
</dbReference>
<reference key="1">
    <citation type="journal article" date="2009" name="J. Biochem.">
        <title>Structural divergence of cysteine-rich secretory proteins in snake venoms.</title>
        <authorList>
            <person name="Matsunaga Y."/>
            <person name="Yamazaki Y."/>
            <person name="Hyodo F."/>
            <person name="Sugiyama Y."/>
            <person name="Nozaki M."/>
            <person name="Morita T."/>
        </authorList>
    </citation>
    <scope>PROTEIN SEQUENCE</scope>
    <source>
        <tissue>Venom</tissue>
    </source>
</reference>
<keyword id="KW-0903">Direct protein sequencing</keyword>
<keyword id="KW-1015">Disulfide bond</keyword>
<keyword id="KW-0964">Secreted</keyword>
<keyword id="KW-0800">Toxin</keyword>
<proteinExistence type="evidence at protein level"/>
<name>CRVPA_PSEGT</name>
<accession>P0DL20</accession>
<evidence type="ECO:0000250" key="1"/>
<evidence type="ECO:0000256" key="2">
    <source>
        <dbReference type="SAM" id="MobiDB-lite"/>
    </source>
</evidence>
<evidence type="ECO:0000305" key="3"/>
<protein>
    <recommendedName>
        <fullName>Cysteine-rich venom protein pseuguttin</fullName>
        <shortName>CRVP</shortName>
    </recommendedName>
</protein>
<feature type="chain" id="PRO_0000422150" description="Cysteine-rich venom protein pseuguttin">
    <location>
        <begin position="1"/>
        <end position="22" status="greater than"/>
    </location>
</feature>
<feature type="region of interest" description="Disordered" evidence="2">
    <location>
        <begin position="1"/>
        <end position="22"/>
    </location>
</feature>
<feature type="compositionally biased region" description="Basic and acidic residues" evidence="2">
    <location>
        <begin position="1"/>
        <end position="15"/>
    </location>
</feature>
<feature type="non-terminal residue">
    <location>
        <position position="22"/>
    </location>
</feature>
<organism>
    <name type="scientific">Pseudechis guttatus</name>
    <name type="common">Spotted black snake</name>
    <name type="synonym">Pseudechis mortonensis</name>
    <dbReference type="NCBI Taxonomy" id="239755"/>
    <lineage>
        <taxon>Eukaryota</taxon>
        <taxon>Metazoa</taxon>
        <taxon>Chordata</taxon>
        <taxon>Craniata</taxon>
        <taxon>Vertebrata</taxon>
        <taxon>Euteleostomi</taxon>
        <taxon>Lepidosauria</taxon>
        <taxon>Squamata</taxon>
        <taxon>Bifurcata</taxon>
        <taxon>Unidentata</taxon>
        <taxon>Episquamata</taxon>
        <taxon>Toxicofera</taxon>
        <taxon>Serpentes</taxon>
        <taxon>Colubroidea</taxon>
        <taxon>Elapidae</taxon>
        <taxon>Hydrophiinae</taxon>
        <taxon>Pseudechis</taxon>
    </lineage>
</organism>
<comment type="subcellular location">
    <subcellularLocation>
        <location>Secreted</location>
    </subcellularLocation>
</comment>
<comment type="tissue specificity">
    <text>Expressed by the venom gland.</text>
</comment>
<comment type="PTM">
    <text evidence="1">Contains 8 disulfide bonds.</text>
</comment>
<comment type="similarity">
    <text evidence="3">Belongs to the CRISP family.</text>
</comment>